<name>PDGFD_RAT</name>
<feature type="signal peptide" evidence="2">
    <location>
        <begin position="1"/>
        <end position="23"/>
    </location>
</feature>
<feature type="chain" id="PRO_0000250196" description="Platelet-derived growth factor D, latent form">
    <location>
        <begin position="24"/>
        <end position="370"/>
    </location>
</feature>
<feature type="chain" id="PRO_0000250197" description="Platelet-derived growth factor D, receptor-binding form" evidence="2">
    <location>
        <begin position="250"/>
        <end position="370"/>
    </location>
</feature>
<feature type="domain" description="CUB" evidence="3">
    <location>
        <begin position="52"/>
        <end position="170"/>
    </location>
</feature>
<feature type="site" description="Cleavage" evidence="2">
    <location>
        <begin position="247"/>
        <end position="248"/>
    </location>
</feature>
<feature type="site" description="Cleavage" evidence="2">
    <location>
        <begin position="249"/>
        <end position="250"/>
    </location>
</feature>
<feature type="glycosylation site" description="N-linked (GlcNAc...) asparagine" evidence="2">
    <location>
        <position position="276"/>
    </location>
</feature>
<feature type="disulfide bond" evidence="3">
    <location>
        <begin position="109"/>
        <end position="131"/>
    </location>
</feature>
<feature type="disulfide bond" description="Interchain" evidence="3">
    <location>
        <position position="296"/>
    </location>
</feature>
<feature type="disulfide bond" evidence="3">
    <location>
        <begin position="302"/>
        <end position="360"/>
    </location>
</feature>
<feature type="disulfide bond" evidence="3">
    <location>
        <begin position="306"/>
        <end position="362"/>
    </location>
</feature>
<feature type="splice variant" id="VSP_020619" description="In isoform 2." evidence="7">
    <location>
        <begin position="42"/>
        <end position="47"/>
    </location>
</feature>
<gene>
    <name type="primary">Pdgfd</name>
    <name type="synonym">Iegf</name>
    <name type="synonym">Scdgfb</name>
</gene>
<sequence>MHRLILVSILVCANFCCYRDTFATPQSASIKALRNANLRRDESNHLTDLYRRDENIRVTGTGHVQSPRFPNSYPRNLLLTWRLHSQEKTRIQLAFDHQFGLEEAENDICRYDFVEVEDVSESSTVVRGRWCGHKEIPPRITSRTNQIKITFQSDDYFVAKPGFKIYYSFVEDFQPEAASEINWESVTSSFSGVSYHSPSVMDSTLTADALDKAIAEFDTVEDLLKYFNPASWQDDLENLYMDTPRYRGRSYHERKSKVDLDRLNDDVKRYSCTPRNHSVNLREELKLTNAVFFPRCLLVQRCGGNCGCGTLNWKSCTCSSGKTVKKYHEVLKFEPGHFKRRGKAKNMALVDIQLDHHERCDCICSSRPPR</sequence>
<organism>
    <name type="scientific">Rattus norvegicus</name>
    <name type="common">Rat</name>
    <dbReference type="NCBI Taxonomy" id="10116"/>
    <lineage>
        <taxon>Eukaryota</taxon>
        <taxon>Metazoa</taxon>
        <taxon>Chordata</taxon>
        <taxon>Craniata</taxon>
        <taxon>Vertebrata</taxon>
        <taxon>Euteleostomi</taxon>
        <taxon>Mammalia</taxon>
        <taxon>Eutheria</taxon>
        <taxon>Euarchontoglires</taxon>
        <taxon>Glires</taxon>
        <taxon>Rodentia</taxon>
        <taxon>Myomorpha</taxon>
        <taxon>Muroidea</taxon>
        <taxon>Muridae</taxon>
        <taxon>Murinae</taxon>
        <taxon>Rattus</taxon>
    </lineage>
</organism>
<comment type="function">
    <text evidence="1 5 6">Growth factor that plays an essential role in the regulation of embryonic development, cell proliferation, cell migration, survival and chemotaxis. Potent mitogen for cells of mesenchymal origin. Plays an important role in wound healing. Induces macrophage recruitment, increased interstitial pressure, and blood vessel maturation during angiogenesis (By similarity). May play an important role in control of lens epithelial cell proliferation. Can initiate events that lead to a mesangial proliferative glomerulonephritis, including influx of monocytes and macrophages and production of extracellular matrix.</text>
</comment>
<comment type="subunit">
    <text evidence="1">Homodimer; disulfide-linked. Interacts with PDGFRB homodimers, and with heterodimers formed by PDGFRA and PDGFRB (By similarity).</text>
</comment>
<comment type="subcellular location">
    <subcellularLocation>
        <location evidence="1">Secreted</location>
    </subcellularLocation>
    <text evidence="1">Released by platelets upon wounding.</text>
</comment>
<comment type="alternative products">
    <event type="alternative splicing"/>
    <isoform>
        <id>Q9EQT1-1</id>
        <name>1</name>
        <sequence type="displayed"/>
    </isoform>
    <isoform>
        <id>Q9EQT1-2</id>
        <name>2</name>
        <sequence type="described" ref="VSP_020619"/>
    </isoform>
</comment>
<comment type="tissue specificity">
    <text evidence="4 5 6">Widely expressed. Expressed at high levels in the kidney, adrenal glands, eye and CNS. In the kidney the localization is confined to arterial and arteriolar vascular smooth muscle cells and is also detected at low levels in the glomeruli In the eye in the anterior segment it is localized to the iris and ciliary body. In the retina localizes intensely to the outer plexiform layer, which contains photoreceptor axons and the synaptic layer between photoreceptors and second order neurons. In the spinal cord, prominently expressed in the motorneurons.</text>
</comment>
<comment type="developmental stage">
    <text evidence="4">Not detected in the spinal cord at 21 dpc. Expressed weakly at postnatal day 1 (P1) and a strong expression seen at P21 and this continues into adulthood.</text>
</comment>
<comment type="PTM">
    <text evidence="1">Activated by proteolytic cleavage. Proteolytic removal of the N-terminal CUB domain releasing the core domain is necessary for unmasking the receptor-binding epitopes of the core domain. Cleavage after Arg-247 or Arg-249 by urokinase plasminogen activator gives rise to the active form (By similarity).</text>
</comment>
<comment type="similarity">
    <text evidence="7">Belongs to the PDGF/VEGF growth factor family.</text>
</comment>
<reference key="1">
    <citation type="journal article" date="2001" name="Biochem. Biophys. Res. Commun.">
        <title>Molecular cloning of SCDGF-B, a novel growth factor homologous to SCDGF/PDGF-C/fallotein.</title>
        <authorList>
            <person name="Hamada T."/>
            <person name="Ui-Tei K."/>
            <person name="Imaki J."/>
            <person name="Miyata Y."/>
        </authorList>
    </citation>
    <scope>NUCLEOTIDE SEQUENCE [MRNA] (ISOFORM 1)</scope>
    <source>
        <tissue>Fetal brain</tissue>
    </source>
</reference>
<reference key="2">
    <citation type="journal article" date="2002" name="Mech. Dev.">
        <title>The expression of SCDGF/PDGF-C/fallotein and SCDGF-B/PDGF-D in the rat central nervous system.</title>
        <authorList>
            <person name="Hamada T."/>
            <person name="Ui-Tei K."/>
            <person name="Imaki J."/>
            <person name="Takahashi F."/>
            <person name="Onodera H."/>
            <person name="Mishima T."/>
            <person name="Miyata Y."/>
        </authorList>
    </citation>
    <scope>IDENTIFICATION OF ISOFORM 2</scope>
    <scope>TISSUE SPECIFICITY</scope>
    <scope>DEVELOPMENTAL STAGE</scope>
</reference>
<reference key="3">
    <citation type="journal article" date="2003" name="J. Am. Soc. Nephrol.">
        <title>A fully human monoclonal antibody (CR002) identifies PDGF-D as a novel mediator of mesangioproliferative glomerulonephritis.</title>
        <authorList>
            <person name="Ostendorf T."/>
            <person name="van Roeyen C.R.C."/>
            <person name="Peterson J.D."/>
            <person name="Kunter U."/>
            <person name="Eitner F."/>
            <person name="Hamad A.J."/>
            <person name="Chan G."/>
            <person name="Jia X.-C."/>
            <person name="Macaluso J."/>
            <person name="Gazit-Bornstein G."/>
            <person name="Keyt B.A."/>
            <person name="Lichenstein H.S."/>
            <person name="LaRochelle W.J."/>
            <person name="Floege J."/>
        </authorList>
    </citation>
    <scope>FUNCTION</scope>
    <scope>TISSUE SPECIFICITY</scope>
</reference>
<reference key="4">
    <citation type="journal article" date="2005" name="J. Biol. Chem.">
        <title>Platelet-derived growth factor D, tissue-specific expression in the eye, and a key role in control of lens epithelial cell proliferation.</title>
        <authorList>
            <person name="Ray S."/>
            <person name="Gao C."/>
            <person name="Wyatt K."/>
            <person name="Fariss R.N."/>
            <person name="Bundek A."/>
            <person name="Zelenka P."/>
            <person name="Wistow G."/>
        </authorList>
    </citation>
    <scope>FUNCTION</scope>
    <scope>TISSUE SPECIFICITY</scope>
</reference>
<evidence type="ECO:0000250" key="1"/>
<evidence type="ECO:0000255" key="2"/>
<evidence type="ECO:0000255" key="3">
    <source>
        <dbReference type="PROSITE-ProRule" id="PRU00059"/>
    </source>
</evidence>
<evidence type="ECO:0000269" key="4">
    <source>
    </source>
</evidence>
<evidence type="ECO:0000269" key="5">
    <source>
    </source>
</evidence>
<evidence type="ECO:0000269" key="6">
    <source>
    </source>
</evidence>
<evidence type="ECO:0000305" key="7"/>
<protein>
    <recommendedName>
        <fullName>Platelet-derived growth factor D</fullName>
        <shortName>PDGF-D</shortName>
    </recommendedName>
    <alternativeName>
        <fullName>Iris-expressed growth factor</fullName>
    </alternativeName>
    <alternativeName>
        <fullName>Spinal cord-derived growth factor B</fullName>
        <shortName>SCDGF-B</shortName>
    </alternativeName>
    <component>
        <recommendedName>
            <fullName>Platelet-derived growth factor D, latent form</fullName>
            <shortName>PDGFD latent form</shortName>
        </recommendedName>
    </component>
    <component>
        <recommendedName>
            <fullName>Platelet-derived growth factor D, receptor-binding form</fullName>
            <shortName>PDGFD receptor-binding form</shortName>
        </recommendedName>
    </component>
</protein>
<keyword id="KW-0025">Alternative splicing</keyword>
<keyword id="KW-0165">Cleavage on pair of basic residues</keyword>
<keyword id="KW-0217">Developmental protein</keyword>
<keyword id="KW-1015">Disulfide bond</keyword>
<keyword id="KW-0325">Glycoprotein</keyword>
<keyword id="KW-0339">Growth factor</keyword>
<keyword id="KW-0497">Mitogen</keyword>
<keyword id="KW-1185">Reference proteome</keyword>
<keyword id="KW-0964">Secreted</keyword>
<keyword id="KW-0732">Signal</keyword>
<accession>Q9EQT1</accession>
<proteinExistence type="evidence at transcript level"/>
<dbReference type="EMBL" id="AB052170">
    <property type="protein sequence ID" value="BAB18920.1"/>
    <property type="molecule type" value="mRNA"/>
</dbReference>
<dbReference type="PIR" id="JC7592">
    <property type="entry name" value="JC7592"/>
</dbReference>
<dbReference type="RefSeq" id="NP_076452.1">
    <molecule id="Q9EQT1-1"/>
    <property type="nucleotide sequence ID" value="NM_023962.3"/>
</dbReference>
<dbReference type="RefSeq" id="XP_038938058.1">
    <molecule id="Q9EQT1-2"/>
    <property type="nucleotide sequence ID" value="XM_039082130.2"/>
</dbReference>
<dbReference type="SMR" id="Q9EQT1"/>
<dbReference type="FunCoup" id="Q9EQT1">
    <property type="interactions" value="1272"/>
</dbReference>
<dbReference type="STRING" id="10116.ENSRNOP00000068187"/>
<dbReference type="GlyCosmos" id="Q9EQT1">
    <property type="glycosylation" value="1 site, No reported glycans"/>
</dbReference>
<dbReference type="GlyGen" id="Q9EQT1">
    <property type="glycosylation" value="1 site"/>
</dbReference>
<dbReference type="PhosphoSitePlus" id="Q9EQT1"/>
<dbReference type="PaxDb" id="10116-ENSRNOP00000068187"/>
<dbReference type="Ensembl" id="ENSRNOT00000076529.3">
    <molecule id="Q9EQT1-2"/>
    <property type="protein sequence ID" value="ENSRNOP00000068187.2"/>
    <property type="gene ID" value="ENSRNOG00000029148.7"/>
</dbReference>
<dbReference type="GeneID" id="66018"/>
<dbReference type="KEGG" id="rno:66018"/>
<dbReference type="UCSC" id="RGD:621880">
    <molecule id="Q9EQT1-1"/>
    <property type="organism name" value="rat"/>
</dbReference>
<dbReference type="AGR" id="RGD:621880"/>
<dbReference type="CTD" id="80310"/>
<dbReference type="RGD" id="621880">
    <property type="gene designation" value="Pdgfd"/>
</dbReference>
<dbReference type="VEuPathDB" id="HostDB:ENSRNOG00000029148"/>
<dbReference type="eggNOG" id="ENOG502QPQY">
    <property type="taxonomic scope" value="Eukaryota"/>
</dbReference>
<dbReference type="GeneTree" id="ENSGT00940000159575"/>
<dbReference type="HOGENOM" id="CLU_037859_1_0_1"/>
<dbReference type="InParanoid" id="Q9EQT1"/>
<dbReference type="OMA" id="HHETCEC"/>
<dbReference type="OrthoDB" id="8641091at2759"/>
<dbReference type="PhylomeDB" id="Q9EQT1"/>
<dbReference type="Reactome" id="R-RNO-186797">
    <property type="pathway name" value="Signaling by PDGF"/>
</dbReference>
<dbReference type="PRO" id="PR:Q9EQT1"/>
<dbReference type="Proteomes" id="UP000002494">
    <property type="component" value="Chromosome 8"/>
</dbReference>
<dbReference type="Bgee" id="ENSRNOG00000029148">
    <property type="expression patterns" value="Expressed in stomach and 17 other cell types or tissues"/>
</dbReference>
<dbReference type="ExpressionAtlas" id="Q9EQT1">
    <property type="expression patterns" value="baseline and differential"/>
</dbReference>
<dbReference type="GO" id="GO:0005615">
    <property type="term" value="C:extracellular space"/>
    <property type="evidence" value="ECO:0000314"/>
    <property type="project" value="RGD"/>
</dbReference>
<dbReference type="GO" id="GO:0016020">
    <property type="term" value="C:membrane"/>
    <property type="evidence" value="ECO:0007669"/>
    <property type="project" value="InterPro"/>
</dbReference>
<dbReference type="GO" id="GO:0008083">
    <property type="term" value="F:growth factor activity"/>
    <property type="evidence" value="ECO:0007669"/>
    <property type="project" value="UniProtKB-KW"/>
</dbReference>
<dbReference type="GO" id="GO:0005161">
    <property type="term" value="F:platelet-derived growth factor receptor binding"/>
    <property type="evidence" value="ECO:0000318"/>
    <property type="project" value="GO_Central"/>
</dbReference>
<dbReference type="GO" id="GO:0071230">
    <property type="term" value="P:cellular response to amino acid stimulus"/>
    <property type="evidence" value="ECO:0000266"/>
    <property type="project" value="RGD"/>
</dbReference>
<dbReference type="GO" id="GO:0070301">
    <property type="term" value="P:cellular response to hydrogen peroxide"/>
    <property type="evidence" value="ECO:0000270"/>
    <property type="project" value="RGD"/>
</dbReference>
<dbReference type="GO" id="GO:0036120">
    <property type="term" value="P:cellular response to platelet-derived growth factor stimulus"/>
    <property type="evidence" value="ECO:0000270"/>
    <property type="project" value="RGD"/>
</dbReference>
<dbReference type="GO" id="GO:0071560">
    <property type="term" value="P:cellular response to transforming growth factor beta stimulus"/>
    <property type="evidence" value="ECO:0000315"/>
    <property type="project" value="RGD"/>
</dbReference>
<dbReference type="GO" id="GO:0048008">
    <property type="term" value="P:platelet-derived growth factor receptor signaling pathway"/>
    <property type="evidence" value="ECO:0000318"/>
    <property type="project" value="GO_Central"/>
</dbReference>
<dbReference type="GO" id="GO:0051781">
    <property type="term" value="P:positive regulation of cell division"/>
    <property type="evidence" value="ECO:0007669"/>
    <property type="project" value="UniProtKB-KW"/>
</dbReference>
<dbReference type="GO" id="GO:0030335">
    <property type="term" value="P:positive regulation of cell migration"/>
    <property type="evidence" value="ECO:0000318"/>
    <property type="project" value="GO_Central"/>
</dbReference>
<dbReference type="GO" id="GO:0008284">
    <property type="term" value="P:positive regulation of cell population proliferation"/>
    <property type="evidence" value="ECO:0000318"/>
    <property type="project" value="GO_Central"/>
</dbReference>
<dbReference type="GO" id="GO:0070374">
    <property type="term" value="P:positive regulation of ERK1 and ERK2 cascade"/>
    <property type="evidence" value="ECO:0000318"/>
    <property type="project" value="GO_Central"/>
</dbReference>
<dbReference type="GO" id="GO:0048146">
    <property type="term" value="P:positive regulation of fibroblast proliferation"/>
    <property type="evidence" value="ECO:0000314"/>
    <property type="project" value="RGD"/>
</dbReference>
<dbReference type="GO" id="GO:0072126">
    <property type="term" value="P:positive regulation of glomerular mesangial cell proliferation"/>
    <property type="evidence" value="ECO:0000315"/>
    <property type="project" value="RGD"/>
</dbReference>
<dbReference type="GO" id="GO:2000439">
    <property type="term" value="P:positive regulation of monocyte extravasation"/>
    <property type="evidence" value="ECO:0000315"/>
    <property type="project" value="RGD"/>
</dbReference>
<dbReference type="GO" id="GO:0051897">
    <property type="term" value="P:positive regulation of phosphatidylinositol 3-kinase/protein kinase B signal transduction"/>
    <property type="evidence" value="ECO:0000318"/>
    <property type="project" value="GO_Central"/>
</dbReference>
<dbReference type="GO" id="GO:0071673">
    <property type="term" value="P:positive regulation of smooth muscle cell chemotaxis"/>
    <property type="evidence" value="ECO:0000315"/>
    <property type="project" value="RGD"/>
</dbReference>
<dbReference type="GO" id="GO:0048661">
    <property type="term" value="P:positive regulation of smooth muscle cell proliferation"/>
    <property type="evidence" value="ECO:0000314"/>
    <property type="project" value="RGD"/>
</dbReference>
<dbReference type="CDD" id="cd00041">
    <property type="entry name" value="CUB"/>
    <property type="match status" value="1"/>
</dbReference>
<dbReference type="CDD" id="cd00135">
    <property type="entry name" value="PDGF"/>
    <property type="match status" value="1"/>
</dbReference>
<dbReference type="FunFam" id="2.10.90.10:FF:000010">
    <property type="entry name" value="Platelet derived growth factor C"/>
    <property type="match status" value="1"/>
</dbReference>
<dbReference type="FunFam" id="2.60.120.290:FF:000017">
    <property type="entry name" value="Platelet derived growth factor C"/>
    <property type="match status" value="1"/>
</dbReference>
<dbReference type="Gene3D" id="2.10.90.10">
    <property type="entry name" value="Cystine-knot cytokines"/>
    <property type="match status" value="1"/>
</dbReference>
<dbReference type="Gene3D" id="2.60.120.290">
    <property type="entry name" value="Spermadhesin, CUB domain"/>
    <property type="match status" value="1"/>
</dbReference>
<dbReference type="InterPro" id="IPR000859">
    <property type="entry name" value="CUB_dom"/>
</dbReference>
<dbReference type="InterPro" id="IPR029034">
    <property type="entry name" value="Cystine-knot_cytokine"/>
</dbReference>
<dbReference type="InterPro" id="IPR000072">
    <property type="entry name" value="PDGF/VEGF_dom"/>
</dbReference>
<dbReference type="InterPro" id="IPR035914">
    <property type="entry name" value="Sperma_CUB_dom_sf"/>
</dbReference>
<dbReference type="PANTHER" id="PTHR11633">
    <property type="entry name" value="PLATELET-DERIVED GROWTH FACTOR"/>
    <property type="match status" value="1"/>
</dbReference>
<dbReference type="PANTHER" id="PTHR11633:SF4">
    <property type="entry name" value="PLATELET-DERIVED GROWTH FACTOR D"/>
    <property type="match status" value="1"/>
</dbReference>
<dbReference type="Pfam" id="PF00431">
    <property type="entry name" value="CUB"/>
    <property type="match status" value="1"/>
</dbReference>
<dbReference type="Pfam" id="PF00341">
    <property type="entry name" value="PDGF"/>
    <property type="match status" value="1"/>
</dbReference>
<dbReference type="SMART" id="SM00042">
    <property type="entry name" value="CUB"/>
    <property type="match status" value="1"/>
</dbReference>
<dbReference type="SMART" id="SM00141">
    <property type="entry name" value="PDGF"/>
    <property type="match status" value="1"/>
</dbReference>
<dbReference type="SUPFAM" id="SSF57501">
    <property type="entry name" value="Cystine-knot cytokines"/>
    <property type="match status" value="1"/>
</dbReference>
<dbReference type="SUPFAM" id="SSF49854">
    <property type="entry name" value="Spermadhesin, CUB domain"/>
    <property type="match status" value="1"/>
</dbReference>
<dbReference type="PROSITE" id="PS01180">
    <property type="entry name" value="CUB"/>
    <property type="match status" value="1"/>
</dbReference>
<dbReference type="PROSITE" id="PS50278">
    <property type="entry name" value="PDGF_2"/>
    <property type="match status" value="1"/>
</dbReference>